<keyword id="KW-0025">Alternative splicing</keyword>
<keyword id="KW-1003">Cell membrane</keyword>
<keyword id="KW-0406">Ion transport</keyword>
<keyword id="KW-0472">Membrane</keyword>
<keyword id="KW-0630">Potassium</keyword>
<keyword id="KW-0633">Potassium transport</keyword>
<keyword id="KW-1185">Reference proteome</keyword>
<keyword id="KW-0812">Transmembrane</keyword>
<keyword id="KW-1133">Transmembrane helix</keyword>
<keyword id="KW-0813">Transport</keyword>
<sequence>MSSALEVEGSGSPGVEPAATATASRLKRHDSLFGDAEKVSGGKHHGGSAVSWAVTLHLAFQSVGIIYGDIGTSPLYVYSSTFPDGIGHRDDLVGVLSLILYTLIIIPMLKYVFIVLYANDNGDGGTFALYSLISRYAKIRMIPNQQAEDAMVSNYSIEAPSSQLRRAQWVKHKLESSRAAKMALFFLTILGTSMVMGDGTLTPAISVLSAVSGIREKAPNLTQTQVVLISVAILFMLFSVQRFGTDKVGYTFAPIISVWFLLIAGIGLYNLVVHEITILKAFNPWYIVQYFRRNGKKGWVSLGGVVLCVTGTEGMFADLGHFNIRAVQISFNCILFPSVALCYIGQAAYLRKFPENVSDTFYKSIPGKYRDRLNFGPLFWPTFIVAILAAIIASQAMLSGAFAILSKALSLGCLPRVRVIHTSKKYEGQVYIPEVNFMMGLASIIVTIAFRTTTSIGNAYGICVVTTFMVTTHLMTVVMLLIWKKHLVFILLFYCVFGFTEVVYLSSILSKFVDGGYLPFCFAMVLMTMMATWHYVHVRRYWYELDHIVPTAELASLLEENGGVRRVPGVGLLYTELVQGIPPLFPRLVRKIPSVHAVFVFISIKHLPIPHVAAAERFLFRQVGPRARRVFRCVARYGYTDALEEPREFAAFLVDGLKMFIQEESAFAPHQEMIDAAADDDDEAAARPRRSTSSAVHSEEAIQAASSGRTTASSVQLQAGGEPPAAMDVEEEKRLIDREVGRGVVYLMGEANVSAGPNSSILKRIAVNYIYTFLRKNLTEGHRALAIPNDQLLKVGITYEI</sequence>
<reference key="1">
    <citation type="submission" date="2003-06" db="EMBL/GenBank/DDBJ databases">
        <authorList>
            <person name="Yao Q."/>
            <person name="Peng R."/>
            <person name="Xiong A."/>
        </authorList>
    </citation>
    <scope>NUCLEOTIDE SEQUENCE [MRNA] (ISOFORM 1)</scope>
</reference>
<reference key="2">
    <citation type="journal article" date="2002" name="Nature">
        <title>Sequence and analysis of rice chromosome 4.</title>
        <authorList>
            <person name="Feng Q."/>
            <person name="Zhang Y."/>
            <person name="Hao P."/>
            <person name="Wang S."/>
            <person name="Fu G."/>
            <person name="Huang Y."/>
            <person name="Li Y."/>
            <person name="Zhu J."/>
            <person name="Liu Y."/>
            <person name="Hu X."/>
            <person name="Jia P."/>
            <person name="Zhang Y."/>
            <person name="Zhao Q."/>
            <person name="Ying K."/>
            <person name="Yu S."/>
            <person name="Tang Y."/>
            <person name="Weng Q."/>
            <person name="Zhang L."/>
            <person name="Lu Y."/>
            <person name="Mu J."/>
            <person name="Lu Y."/>
            <person name="Zhang L.S."/>
            <person name="Yu Z."/>
            <person name="Fan D."/>
            <person name="Liu X."/>
            <person name="Lu T."/>
            <person name="Li C."/>
            <person name="Wu Y."/>
            <person name="Sun T."/>
            <person name="Lei H."/>
            <person name="Li T."/>
            <person name="Hu H."/>
            <person name="Guan J."/>
            <person name="Wu M."/>
            <person name="Zhang R."/>
            <person name="Zhou B."/>
            <person name="Chen Z."/>
            <person name="Chen L."/>
            <person name="Jin Z."/>
            <person name="Wang R."/>
            <person name="Yin H."/>
            <person name="Cai Z."/>
            <person name="Ren S."/>
            <person name="Lv G."/>
            <person name="Gu W."/>
            <person name="Zhu G."/>
            <person name="Tu Y."/>
            <person name="Jia J."/>
            <person name="Zhang Y."/>
            <person name="Chen J."/>
            <person name="Kang H."/>
            <person name="Chen X."/>
            <person name="Shao C."/>
            <person name="Sun Y."/>
            <person name="Hu Q."/>
            <person name="Zhang X."/>
            <person name="Zhang W."/>
            <person name="Wang L."/>
            <person name="Ding C."/>
            <person name="Sheng H."/>
            <person name="Gu J."/>
            <person name="Chen S."/>
            <person name="Ni L."/>
            <person name="Zhu F."/>
            <person name="Chen W."/>
            <person name="Lan L."/>
            <person name="Lai Y."/>
            <person name="Cheng Z."/>
            <person name="Gu M."/>
            <person name="Jiang J."/>
            <person name="Li J."/>
            <person name="Hong G."/>
            <person name="Xue Y."/>
            <person name="Han B."/>
        </authorList>
    </citation>
    <scope>NUCLEOTIDE SEQUENCE [LARGE SCALE GENOMIC DNA]</scope>
    <source>
        <strain>cv. Nipponbare</strain>
    </source>
</reference>
<reference key="3">
    <citation type="journal article" date="2005" name="Nature">
        <title>The map-based sequence of the rice genome.</title>
        <authorList>
            <consortium name="International rice genome sequencing project (IRGSP)"/>
        </authorList>
    </citation>
    <scope>NUCLEOTIDE SEQUENCE [LARGE SCALE GENOMIC DNA]</scope>
    <source>
        <strain>cv. Nipponbare</strain>
    </source>
</reference>
<reference key="4">
    <citation type="journal article" date="2008" name="Nucleic Acids Res.">
        <title>The rice annotation project database (RAP-DB): 2008 update.</title>
        <authorList>
            <consortium name="The rice annotation project (RAP)"/>
        </authorList>
    </citation>
    <scope>GENOME REANNOTATION</scope>
    <source>
        <strain>cv. Nipponbare</strain>
    </source>
</reference>
<reference key="5">
    <citation type="journal article" date="2013" name="Rice">
        <title>Improvement of the Oryza sativa Nipponbare reference genome using next generation sequence and optical map data.</title>
        <authorList>
            <person name="Kawahara Y."/>
            <person name="de la Bastide M."/>
            <person name="Hamilton J.P."/>
            <person name="Kanamori H."/>
            <person name="McCombie W.R."/>
            <person name="Ouyang S."/>
            <person name="Schwartz D.C."/>
            <person name="Tanaka T."/>
            <person name="Wu J."/>
            <person name="Zhou S."/>
            <person name="Childs K.L."/>
            <person name="Davidson R.M."/>
            <person name="Lin H."/>
            <person name="Quesada-Ocampo L."/>
            <person name="Vaillancourt B."/>
            <person name="Sakai H."/>
            <person name="Lee S.S."/>
            <person name="Kim J."/>
            <person name="Numa H."/>
            <person name="Itoh T."/>
            <person name="Buell C.R."/>
            <person name="Matsumoto T."/>
        </authorList>
    </citation>
    <scope>GENOME REANNOTATION</scope>
    <source>
        <strain>cv. Nipponbare</strain>
    </source>
</reference>
<reference key="6">
    <citation type="journal article" date="2005" name="PLoS Biol.">
        <title>The genomes of Oryza sativa: a history of duplications.</title>
        <authorList>
            <person name="Yu J."/>
            <person name="Wang J."/>
            <person name="Lin W."/>
            <person name="Li S."/>
            <person name="Li H."/>
            <person name="Zhou J."/>
            <person name="Ni P."/>
            <person name="Dong W."/>
            <person name="Hu S."/>
            <person name="Zeng C."/>
            <person name="Zhang J."/>
            <person name="Zhang Y."/>
            <person name="Li R."/>
            <person name="Xu Z."/>
            <person name="Li S."/>
            <person name="Li X."/>
            <person name="Zheng H."/>
            <person name="Cong L."/>
            <person name="Lin L."/>
            <person name="Yin J."/>
            <person name="Geng J."/>
            <person name="Li G."/>
            <person name="Shi J."/>
            <person name="Liu J."/>
            <person name="Lv H."/>
            <person name="Li J."/>
            <person name="Wang J."/>
            <person name="Deng Y."/>
            <person name="Ran L."/>
            <person name="Shi X."/>
            <person name="Wang X."/>
            <person name="Wu Q."/>
            <person name="Li C."/>
            <person name="Ren X."/>
            <person name="Wang J."/>
            <person name="Wang X."/>
            <person name="Li D."/>
            <person name="Liu D."/>
            <person name="Zhang X."/>
            <person name="Ji Z."/>
            <person name="Zhao W."/>
            <person name="Sun Y."/>
            <person name="Zhang Z."/>
            <person name="Bao J."/>
            <person name="Han Y."/>
            <person name="Dong L."/>
            <person name="Ji J."/>
            <person name="Chen P."/>
            <person name="Wu S."/>
            <person name="Liu J."/>
            <person name="Xiao Y."/>
            <person name="Bu D."/>
            <person name="Tan J."/>
            <person name="Yang L."/>
            <person name="Ye C."/>
            <person name="Zhang J."/>
            <person name="Xu J."/>
            <person name="Zhou Y."/>
            <person name="Yu Y."/>
            <person name="Zhang B."/>
            <person name="Zhuang S."/>
            <person name="Wei H."/>
            <person name="Liu B."/>
            <person name="Lei M."/>
            <person name="Yu H."/>
            <person name="Li Y."/>
            <person name="Xu H."/>
            <person name="Wei S."/>
            <person name="He X."/>
            <person name="Fang L."/>
            <person name="Zhang Z."/>
            <person name="Zhang Y."/>
            <person name="Huang X."/>
            <person name="Su Z."/>
            <person name="Tong W."/>
            <person name="Li J."/>
            <person name="Tong Z."/>
            <person name="Li S."/>
            <person name="Ye J."/>
            <person name="Wang L."/>
            <person name="Fang L."/>
            <person name="Lei T."/>
            <person name="Chen C.-S."/>
            <person name="Chen H.-C."/>
            <person name="Xu Z."/>
            <person name="Li H."/>
            <person name="Huang H."/>
            <person name="Zhang F."/>
            <person name="Xu H."/>
            <person name="Li N."/>
            <person name="Zhao C."/>
            <person name="Li S."/>
            <person name="Dong L."/>
            <person name="Huang Y."/>
            <person name="Li L."/>
            <person name="Xi Y."/>
            <person name="Qi Q."/>
            <person name="Li W."/>
            <person name="Zhang B."/>
            <person name="Hu W."/>
            <person name="Zhang Y."/>
            <person name="Tian X."/>
            <person name="Jiao Y."/>
            <person name="Liang X."/>
            <person name="Jin J."/>
            <person name="Gao L."/>
            <person name="Zheng W."/>
            <person name="Hao B."/>
            <person name="Liu S.-M."/>
            <person name="Wang W."/>
            <person name="Yuan L."/>
            <person name="Cao M."/>
            <person name="McDermott J."/>
            <person name="Samudrala R."/>
            <person name="Wang J."/>
            <person name="Wong G.K.-S."/>
            <person name="Yang H."/>
        </authorList>
    </citation>
    <scope>NUCLEOTIDE SEQUENCE [LARGE SCALE GENOMIC DNA]</scope>
    <source>
        <strain>cv. Nipponbare</strain>
    </source>
</reference>
<reference key="7">
    <citation type="journal article" date="2002" name="Plant Physiol.">
        <title>Inventory and functional characterization of the HAK potassium transporters of rice.</title>
        <authorList>
            <person name="Banuelos M.A."/>
            <person name="Garciadeblas B."/>
            <person name="Cubero B."/>
            <person name="Rodriguez-Navarro A."/>
        </authorList>
    </citation>
    <scope>NUCLEOTIDE SEQUENCE [MRNA] OF 26-801 (ISOFORM 2)</scope>
    <scope>FUNCTION</scope>
    <scope>TISSUE SPECIFICITY</scope>
    <scope>NOMENCLATURE</scope>
    <scope>INDUCTION</scope>
    <source>
        <strain>cv. Nipponbare</strain>
    </source>
</reference>
<reference key="8">
    <citation type="journal article" date="2009" name="J. Genet. Genomics">
        <title>Molecular evolution and functional divergence of HAK potassium transporter gene family in rice (Oryza sativa L.).</title>
        <authorList>
            <person name="Yang Z."/>
            <person name="Gao Q."/>
            <person name="Sun C."/>
            <person name="Li W."/>
            <person name="Gu S."/>
            <person name="Xu C."/>
        </authorList>
    </citation>
    <scope>GENE FAMILY</scope>
</reference>
<dbReference type="EMBL" id="AY324878">
    <property type="protein sequence ID" value="AAQ74384.1"/>
    <property type="molecule type" value="mRNA"/>
</dbReference>
<dbReference type="EMBL" id="AL606610">
    <property type="protein sequence ID" value="CAD40783.1"/>
    <property type="molecule type" value="Genomic_DNA"/>
</dbReference>
<dbReference type="EMBL" id="AP008210">
    <property type="protein sequence ID" value="BAF14603.1"/>
    <property type="molecule type" value="Genomic_DNA"/>
</dbReference>
<dbReference type="EMBL" id="AP014960">
    <property type="protein sequence ID" value="BAS89046.1"/>
    <property type="molecule type" value="Genomic_DNA"/>
</dbReference>
<dbReference type="EMBL" id="CM000141">
    <property type="protein sequence ID" value="EAZ30610.1"/>
    <property type="molecule type" value="Genomic_DNA"/>
</dbReference>
<dbReference type="EMBL" id="AJ427970">
    <property type="protein sequence ID" value="CAD20991.1"/>
    <property type="molecule type" value="mRNA"/>
</dbReference>
<dbReference type="RefSeq" id="XP_015635766.1">
    <property type="nucleotide sequence ID" value="XM_015780280.1"/>
</dbReference>
<dbReference type="RefSeq" id="XP_015635767.1">
    <property type="nucleotide sequence ID" value="XM_015780281.1"/>
</dbReference>
<dbReference type="RefSeq" id="XP_015635769.1">
    <property type="nucleotide sequence ID" value="XM_015780283.1"/>
</dbReference>
<dbReference type="FunCoup" id="Q6VVA6">
    <property type="interactions" value="26"/>
</dbReference>
<dbReference type="STRING" id="39947.Q6VVA6"/>
<dbReference type="TCDB" id="2.A.72.3.7">
    <property type="family name" value="the k(+) uptake permease (kup) family"/>
</dbReference>
<dbReference type="iPTMnet" id="Q6VVA6"/>
<dbReference type="PaxDb" id="39947-Q6VVA6"/>
<dbReference type="KEGG" id="dosa:Os04g0401700"/>
<dbReference type="eggNOG" id="ENOG502QPSA">
    <property type="taxonomic scope" value="Eukaryota"/>
</dbReference>
<dbReference type="HOGENOM" id="CLU_008142_2_0_1"/>
<dbReference type="InParanoid" id="Q6VVA6"/>
<dbReference type="OMA" id="HAVFVFI"/>
<dbReference type="OrthoDB" id="504708at2759"/>
<dbReference type="BioCyc" id="MetaCyc:MONOMER-14582"/>
<dbReference type="SABIO-RK" id="Q6VVA6"/>
<dbReference type="Proteomes" id="UP000000763">
    <property type="component" value="Chromosome 4"/>
</dbReference>
<dbReference type="Proteomes" id="UP000007752">
    <property type="component" value="Chromosome 4"/>
</dbReference>
<dbReference type="Proteomes" id="UP000059680">
    <property type="component" value="Chromosome 4"/>
</dbReference>
<dbReference type="GO" id="GO:0016020">
    <property type="term" value="C:membrane"/>
    <property type="evidence" value="ECO:0000318"/>
    <property type="project" value="GO_Central"/>
</dbReference>
<dbReference type="GO" id="GO:0005886">
    <property type="term" value="C:plasma membrane"/>
    <property type="evidence" value="ECO:0007669"/>
    <property type="project" value="UniProtKB-SubCell"/>
</dbReference>
<dbReference type="GO" id="GO:0015079">
    <property type="term" value="F:potassium ion transmembrane transporter activity"/>
    <property type="evidence" value="ECO:0000318"/>
    <property type="project" value="GO_Central"/>
</dbReference>
<dbReference type="GO" id="GO:0006813">
    <property type="term" value="P:potassium ion transport"/>
    <property type="evidence" value="ECO:0000314"/>
    <property type="project" value="CACAO"/>
</dbReference>
<dbReference type="InterPro" id="IPR003855">
    <property type="entry name" value="K+_transporter"/>
</dbReference>
<dbReference type="InterPro" id="IPR053952">
    <property type="entry name" value="K_trans_C"/>
</dbReference>
<dbReference type="InterPro" id="IPR053951">
    <property type="entry name" value="K_trans_N"/>
</dbReference>
<dbReference type="NCBIfam" id="TIGR00794">
    <property type="entry name" value="kup"/>
    <property type="match status" value="1"/>
</dbReference>
<dbReference type="PANTHER" id="PTHR30540">
    <property type="entry name" value="OSMOTIC STRESS POTASSIUM TRANSPORTER"/>
    <property type="match status" value="1"/>
</dbReference>
<dbReference type="PANTHER" id="PTHR30540:SF102">
    <property type="entry name" value="POTASSIUM TRANSPORTER 1"/>
    <property type="match status" value="1"/>
</dbReference>
<dbReference type="Pfam" id="PF02705">
    <property type="entry name" value="K_trans"/>
    <property type="match status" value="1"/>
</dbReference>
<dbReference type="Pfam" id="PF22776">
    <property type="entry name" value="K_trans_C"/>
    <property type="match status" value="1"/>
</dbReference>
<evidence type="ECO:0000255" key="1"/>
<evidence type="ECO:0000256" key="2">
    <source>
        <dbReference type="SAM" id="MobiDB-lite"/>
    </source>
</evidence>
<evidence type="ECO:0000269" key="3">
    <source>
    </source>
</evidence>
<evidence type="ECO:0000303" key="4">
    <source>
    </source>
</evidence>
<evidence type="ECO:0000305" key="5"/>
<proteinExistence type="evidence at protein level"/>
<protein>
    <recommendedName>
        <fullName>Potassium transporter 1</fullName>
    </recommendedName>
    <alternativeName>
        <fullName>OsHAK1</fullName>
    </alternativeName>
</protein>
<gene>
    <name type="primary">HAK1</name>
    <name type="ordered locus">Os04g0401700</name>
    <name type="ordered locus">LOC_Os04g32920</name>
    <name type="ORF">OsJ_14662</name>
    <name type="ORF">OSJNBb0012E08.7</name>
</gene>
<name>HAK1_ORYSJ</name>
<accession>Q6VVA6</accession>
<accession>A3ATH1</accession>
<accession>Q0JDI4</accession>
<accession>Q7XV89</accession>
<accession>Q8VXC0</accession>
<organism>
    <name type="scientific">Oryza sativa subsp. japonica</name>
    <name type="common">Rice</name>
    <dbReference type="NCBI Taxonomy" id="39947"/>
    <lineage>
        <taxon>Eukaryota</taxon>
        <taxon>Viridiplantae</taxon>
        <taxon>Streptophyta</taxon>
        <taxon>Embryophyta</taxon>
        <taxon>Tracheophyta</taxon>
        <taxon>Spermatophyta</taxon>
        <taxon>Magnoliopsida</taxon>
        <taxon>Liliopsida</taxon>
        <taxon>Poales</taxon>
        <taxon>Poaceae</taxon>
        <taxon>BOP clade</taxon>
        <taxon>Oryzoideae</taxon>
        <taxon>Oryzeae</taxon>
        <taxon>Oryzinae</taxon>
        <taxon>Oryza</taxon>
        <taxon>Oryza sativa</taxon>
    </lineage>
</organism>
<feature type="chain" id="PRO_0000209090" description="Potassium transporter 1">
    <location>
        <begin position="1"/>
        <end position="801"/>
    </location>
</feature>
<feature type="topological domain" description="Cytoplasmic" evidence="1">
    <location>
        <begin position="1"/>
        <end position="57"/>
    </location>
</feature>
<feature type="transmembrane region" description="Helical; Name=1" evidence="1">
    <location>
        <begin position="58"/>
        <end position="80"/>
    </location>
</feature>
<feature type="topological domain" description="Extracellular" evidence="1">
    <location>
        <begin position="81"/>
        <end position="94"/>
    </location>
</feature>
<feature type="transmembrane region" description="Helical; Name=2" evidence="1">
    <location>
        <begin position="95"/>
        <end position="115"/>
    </location>
</feature>
<feature type="topological domain" description="Cytoplasmic" evidence="1">
    <location>
        <begin position="116"/>
        <end position="181"/>
    </location>
</feature>
<feature type="transmembrane region" description="Helical; Name=3" evidence="1">
    <location>
        <begin position="182"/>
        <end position="202"/>
    </location>
</feature>
<feature type="topological domain" description="Extracellular" evidence="1">
    <location>
        <begin position="203"/>
        <end position="219"/>
    </location>
</feature>
<feature type="transmembrane region" description="Helical; Name=4" evidence="1">
    <location>
        <begin position="220"/>
        <end position="240"/>
    </location>
</feature>
<feature type="topological domain" description="Cytoplasmic" evidence="1">
    <location>
        <begin position="241"/>
        <end position="247"/>
    </location>
</feature>
<feature type="transmembrane region" description="Helical; Name=5" evidence="1">
    <location>
        <begin position="248"/>
        <end position="268"/>
    </location>
</feature>
<feature type="topological domain" description="Extracellular" evidence="1">
    <location>
        <begin position="269"/>
        <end position="298"/>
    </location>
</feature>
<feature type="transmembrane region" description="Helical; Name=6" evidence="1">
    <location>
        <begin position="299"/>
        <end position="319"/>
    </location>
</feature>
<feature type="topological domain" description="Cytoplasmic" evidence="1">
    <location>
        <begin position="320"/>
        <end position="328"/>
    </location>
</feature>
<feature type="transmembrane region" description="Helical; Name=7" evidence="1">
    <location>
        <begin position="329"/>
        <end position="349"/>
    </location>
</feature>
<feature type="topological domain" description="Extracellular" evidence="1">
    <location>
        <begin position="350"/>
        <end position="375"/>
    </location>
</feature>
<feature type="transmembrane region" description="Helical; Name=8" evidence="1">
    <location>
        <begin position="376"/>
        <end position="398"/>
    </location>
</feature>
<feature type="topological domain" description="Cytoplasmic" evidence="1">
    <location>
        <begin position="399"/>
        <end position="429"/>
    </location>
</feature>
<feature type="transmembrane region" description="Helical; Name=9" evidence="1">
    <location>
        <begin position="430"/>
        <end position="450"/>
    </location>
</feature>
<feature type="topological domain" description="Extracellular" evidence="1">
    <location>
        <begin position="451"/>
        <end position="461"/>
    </location>
</feature>
<feature type="transmembrane region" description="Helical; Name=10" evidence="1">
    <location>
        <begin position="462"/>
        <end position="482"/>
    </location>
</feature>
<feature type="topological domain" description="Cytoplasmic" evidence="1">
    <location>
        <begin position="483"/>
        <end position="487"/>
    </location>
</feature>
<feature type="transmembrane region" description="Helical; Name=11" evidence="1">
    <location>
        <begin position="488"/>
        <end position="508"/>
    </location>
</feature>
<feature type="topological domain" description="Extracellular" evidence="1">
    <location>
        <begin position="509"/>
        <end position="511"/>
    </location>
</feature>
<feature type="transmembrane region" description="Helical; Name=12" evidence="1">
    <location>
        <begin position="512"/>
        <end position="532"/>
    </location>
</feature>
<feature type="topological domain" description="Cytoplasmic" evidence="1">
    <location>
        <begin position="533"/>
        <end position="801"/>
    </location>
</feature>
<feature type="region of interest" description="Disordered" evidence="2">
    <location>
        <begin position="1"/>
        <end position="20"/>
    </location>
</feature>
<feature type="region of interest" description="Disordered" evidence="2">
    <location>
        <begin position="679"/>
        <end position="728"/>
    </location>
</feature>
<feature type="compositionally biased region" description="Polar residues" evidence="2">
    <location>
        <begin position="704"/>
        <end position="717"/>
    </location>
</feature>
<feature type="splice variant" id="VSP_013570" description="In isoform 2." evidence="4">
    <location>
        <begin position="367"/>
        <end position="375"/>
    </location>
</feature>
<feature type="sequence conflict" description="In Ref. 1; AAQ74384." evidence="5" ref="1">
    <original>K</original>
    <variation>E</variation>
    <location>
        <position position="43"/>
    </location>
</feature>
<feature type="sequence conflict" description="In Ref. 1; AAQ74384." evidence="5" ref="1">
    <original>R</original>
    <variation>G</variation>
    <location>
        <position position="689"/>
    </location>
</feature>
<feature type="sequence conflict" description="In Ref. 1; AAQ74384." evidence="5" ref="1">
    <original>Y</original>
    <variation>F</variation>
    <location>
        <position position="771"/>
    </location>
</feature>
<comment type="function">
    <text evidence="3">High-affinity potassium transporter. Also transports rubidium, with the same affinity and cesium, with a lower affinity.</text>
</comment>
<comment type="biophysicochemical properties">
    <kinetics>
        <KM>6 uM for K(+) (at pH 5.5)</KM>
        <KM>6 uM for Rb(+) (at pH 5.5)</KM>
        <KM>11 uM for Cs(+) (at pH 5.5)</KM>
        <KM>6000 uM for Na(+) (at pH 5.5)</KM>
        <Vmax>10.0 nmol/min/mg enzyme with K(+) as ion</Vmax>
        <Vmax>10.0 nmol/min/mg enzyme with Rb(+) as ion</Vmax>
    </kinetics>
</comment>
<comment type="subcellular location">
    <subcellularLocation>
        <location evidence="5">Cell membrane</location>
        <topology evidence="5">Multi-pass membrane protein</topology>
    </subcellularLocation>
</comment>
<comment type="alternative products">
    <event type="alternative splicing"/>
    <isoform>
        <id>Q6VVA6-1</id>
        <name>1</name>
        <sequence type="displayed"/>
    </isoform>
    <isoform>
        <id>Q6VVA6-2</id>
        <name>2</name>
        <sequence type="described" ref="VSP_013570"/>
    </isoform>
</comment>
<comment type="tissue specificity">
    <text evidence="3">Expressed almost exclusively in roots.</text>
</comment>
<comment type="induction">
    <text evidence="3">By potassium starvation in roots of young seedlings.</text>
</comment>
<comment type="similarity">
    <text evidence="5">Belongs to the HAK/KUP transporter (TC 2.A.72.3) family.</text>
</comment>